<reference key="1">
    <citation type="submission" date="2007-08" db="EMBL/GenBank/DDBJ databases">
        <authorList>
            <consortium name="The Citrobacter koseri Genome Sequencing Project"/>
            <person name="McClelland M."/>
            <person name="Sanderson E.K."/>
            <person name="Porwollik S."/>
            <person name="Spieth J."/>
            <person name="Clifton W.S."/>
            <person name="Latreille P."/>
            <person name="Courtney L."/>
            <person name="Wang C."/>
            <person name="Pepin K."/>
            <person name="Bhonagiri V."/>
            <person name="Nash W."/>
            <person name="Johnson M."/>
            <person name="Thiruvilangam P."/>
            <person name="Wilson R."/>
        </authorList>
    </citation>
    <scope>NUCLEOTIDE SEQUENCE [LARGE SCALE GENOMIC DNA]</scope>
    <source>
        <strain>ATCC BAA-895 / CDC 4225-83 / SGSC4696</strain>
    </source>
</reference>
<proteinExistence type="inferred from homology"/>
<protein>
    <recommendedName>
        <fullName evidence="1">Protoheme IX farnesyltransferase</fullName>
        <ecNumber evidence="1">2.5.1.141</ecNumber>
    </recommendedName>
    <alternativeName>
        <fullName evidence="1">Heme B farnesyltransferase</fullName>
    </alternativeName>
    <alternativeName>
        <fullName evidence="1">Heme O synthase</fullName>
    </alternativeName>
</protein>
<evidence type="ECO:0000255" key="1">
    <source>
        <dbReference type="HAMAP-Rule" id="MF_00154"/>
    </source>
</evidence>
<accession>A8AK26</accession>
<gene>
    <name evidence="1" type="primary">cyoE</name>
    <name type="ordered locus">CKO_02733</name>
</gene>
<feature type="chain" id="PRO_0000326887" description="Protoheme IX farnesyltransferase">
    <location>
        <begin position="1"/>
        <end position="296"/>
    </location>
</feature>
<feature type="transmembrane region" description="Helical" evidence="1">
    <location>
        <begin position="9"/>
        <end position="29"/>
    </location>
</feature>
<feature type="transmembrane region" description="Helical" evidence="1">
    <location>
        <begin position="36"/>
        <end position="56"/>
    </location>
</feature>
<feature type="transmembrane region" description="Helical" evidence="1">
    <location>
        <begin position="84"/>
        <end position="104"/>
    </location>
</feature>
<feature type="transmembrane region" description="Helical" evidence="1">
    <location>
        <begin position="108"/>
        <end position="128"/>
    </location>
</feature>
<feature type="transmembrane region" description="Helical" evidence="1">
    <location>
        <begin position="133"/>
        <end position="153"/>
    </location>
</feature>
<feature type="transmembrane region" description="Helical" evidence="1">
    <location>
        <begin position="163"/>
        <end position="183"/>
    </location>
</feature>
<feature type="transmembrane region" description="Helical" evidence="1">
    <location>
        <begin position="209"/>
        <end position="229"/>
    </location>
</feature>
<feature type="transmembrane region" description="Helical" evidence="1">
    <location>
        <begin position="234"/>
        <end position="254"/>
    </location>
</feature>
<feature type="transmembrane region" description="Helical" evidence="1">
    <location>
        <begin position="265"/>
        <end position="285"/>
    </location>
</feature>
<comment type="function">
    <text evidence="1">Converts heme B (protoheme IX) to heme O by substitution of the vinyl group on carbon 2 of heme B porphyrin ring with a hydroxyethyl farnesyl side group.</text>
</comment>
<comment type="catalytic activity">
    <reaction evidence="1">
        <text>heme b + (2E,6E)-farnesyl diphosphate + H2O = Fe(II)-heme o + diphosphate</text>
        <dbReference type="Rhea" id="RHEA:28070"/>
        <dbReference type="ChEBI" id="CHEBI:15377"/>
        <dbReference type="ChEBI" id="CHEBI:33019"/>
        <dbReference type="ChEBI" id="CHEBI:60344"/>
        <dbReference type="ChEBI" id="CHEBI:60530"/>
        <dbReference type="ChEBI" id="CHEBI:175763"/>
        <dbReference type="EC" id="2.5.1.141"/>
    </reaction>
</comment>
<comment type="pathway">
    <text evidence="1">Porphyrin-containing compound metabolism; heme O biosynthesis; heme O from protoheme: step 1/1.</text>
</comment>
<comment type="subcellular location">
    <subcellularLocation>
        <location evidence="1">Cell inner membrane</location>
        <topology evidence="1">Multi-pass membrane protein</topology>
    </subcellularLocation>
</comment>
<comment type="miscellaneous">
    <text evidence="1">Carbon 2 of the heme B porphyrin ring is defined according to the Fischer nomenclature.</text>
</comment>
<comment type="similarity">
    <text evidence="1">Belongs to the UbiA prenyltransferase family. Protoheme IX farnesyltransferase subfamily.</text>
</comment>
<keyword id="KW-0997">Cell inner membrane</keyword>
<keyword id="KW-1003">Cell membrane</keyword>
<keyword id="KW-0350">Heme biosynthesis</keyword>
<keyword id="KW-0472">Membrane</keyword>
<keyword id="KW-1185">Reference proteome</keyword>
<keyword id="KW-0808">Transferase</keyword>
<keyword id="KW-0812">Transmembrane</keyword>
<keyword id="KW-1133">Transmembrane helix</keyword>
<sequence length="296" mass="32322">MMFKQYLQVTKPGIIFGNLISVIGGFLLASKGSINYPLFIYTLVGVSLVVASGCVFNNYIDRDIDRKMERTKNRVLVKGLISPAVSLVYATLLGIAGFMLLWFGANPLACWLGVMGFVVYVGIYSLYMKRHSVYGTLIGSLSGAAPPVIGYCAVTGEFDSGALILLAIFSLWQMPHSYAIAIFRFKDYQAANIPVLPVVKGISVAKNHITLYIIAFAVATLMLSLGGYAGYKYLVVAAAVSVWWLGMALRGYKVEDDKVWARKLFGFSIIAITALSVMMSVDFMVPDSHSLLASVW</sequence>
<name>CYOE_CITK8</name>
<organism>
    <name type="scientific">Citrobacter koseri (strain ATCC BAA-895 / CDC 4225-83 / SGSC4696)</name>
    <dbReference type="NCBI Taxonomy" id="290338"/>
    <lineage>
        <taxon>Bacteria</taxon>
        <taxon>Pseudomonadati</taxon>
        <taxon>Pseudomonadota</taxon>
        <taxon>Gammaproteobacteria</taxon>
        <taxon>Enterobacterales</taxon>
        <taxon>Enterobacteriaceae</taxon>
        <taxon>Citrobacter</taxon>
    </lineage>
</organism>
<dbReference type="EC" id="2.5.1.141" evidence="1"/>
<dbReference type="EMBL" id="CP000822">
    <property type="protein sequence ID" value="ABV13839.1"/>
    <property type="molecule type" value="Genomic_DNA"/>
</dbReference>
<dbReference type="RefSeq" id="WP_012133554.1">
    <property type="nucleotide sequence ID" value="NC_009792.1"/>
</dbReference>
<dbReference type="SMR" id="A8AK26"/>
<dbReference type="STRING" id="290338.CKO_02733"/>
<dbReference type="GeneID" id="45136587"/>
<dbReference type="KEGG" id="cko:CKO_02733"/>
<dbReference type="HOGENOM" id="CLU_029631_0_0_6"/>
<dbReference type="OrthoDB" id="9814417at2"/>
<dbReference type="UniPathway" id="UPA00834">
    <property type="reaction ID" value="UER00712"/>
</dbReference>
<dbReference type="Proteomes" id="UP000008148">
    <property type="component" value="Chromosome"/>
</dbReference>
<dbReference type="GO" id="GO:0005886">
    <property type="term" value="C:plasma membrane"/>
    <property type="evidence" value="ECO:0007669"/>
    <property type="project" value="UniProtKB-SubCell"/>
</dbReference>
<dbReference type="GO" id="GO:0008495">
    <property type="term" value="F:protoheme IX farnesyltransferase activity"/>
    <property type="evidence" value="ECO:0007669"/>
    <property type="project" value="UniProtKB-UniRule"/>
</dbReference>
<dbReference type="GO" id="GO:0048034">
    <property type="term" value="P:heme O biosynthetic process"/>
    <property type="evidence" value="ECO:0007669"/>
    <property type="project" value="UniProtKB-UniRule"/>
</dbReference>
<dbReference type="CDD" id="cd13957">
    <property type="entry name" value="PT_UbiA_Cox10"/>
    <property type="match status" value="1"/>
</dbReference>
<dbReference type="FunFam" id="1.10.357.140:FF:000001">
    <property type="entry name" value="Protoheme IX farnesyltransferase"/>
    <property type="match status" value="1"/>
</dbReference>
<dbReference type="Gene3D" id="1.10.357.140">
    <property type="entry name" value="UbiA prenyltransferase"/>
    <property type="match status" value="1"/>
</dbReference>
<dbReference type="HAMAP" id="MF_00154">
    <property type="entry name" value="CyoE_CtaB"/>
    <property type="match status" value="1"/>
</dbReference>
<dbReference type="InterPro" id="IPR006369">
    <property type="entry name" value="Protohaem_IX_farnesylTrfase"/>
</dbReference>
<dbReference type="InterPro" id="IPR000537">
    <property type="entry name" value="UbiA_prenyltransferase"/>
</dbReference>
<dbReference type="InterPro" id="IPR030470">
    <property type="entry name" value="UbiA_prenylTrfase_CS"/>
</dbReference>
<dbReference type="InterPro" id="IPR044878">
    <property type="entry name" value="UbiA_sf"/>
</dbReference>
<dbReference type="NCBIfam" id="TIGR01473">
    <property type="entry name" value="cyoE_ctaB"/>
    <property type="match status" value="1"/>
</dbReference>
<dbReference type="NCBIfam" id="NF003348">
    <property type="entry name" value="PRK04375.1-1"/>
    <property type="match status" value="1"/>
</dbReference>
<dbReference type="PANTHER" id="PTHR43448">
    <property type="entry name" value="PROTOHEME IX FARNESYLTRANSFERASE, MITOCHONDRIAL"/>
    <property type="match status" value="1"/>
</dbReference>
<dbReference type="PANTHER" id="PTHR43448:SF2">
    <property type="entry name" value="PROTOHEME IX FARNESYLTRANSFERASE, MITOCHONDRIAL"/>
    <property type="match status" value="1"/>
</dbReference>
<dbReference type="Pfam" id="PF01040">
    <property type="entry name" value="UbiA"/>
    <property type="match status" value="1"/>
</dbReference>
<dbReference type="PROSITE" id="PS00943">
    <property type="entry name" value="UBIA"/>
    <property type="match status" value="1"/>
</dbReference>